<gene>
    <name type="ordered locus">At1g60750</name>
    <name type="ORF">F8A5.26</name>
</gene>
<evidence type="ECO:0000250" key="1"/>
<evidence type="ECO:0000305" key="2"/>
<dbReference type="EC" id="1.1.1.-"/>
<dbReference type="EMBL" id="AC002292">
    <property type="protein sequence ID" value="AAB71969.1"/>
    <property type="status" value="ALT_SEQ"/>
    <property type="molecule type" value="Genomic_DNA"/>
</dbReference>
<dbReference type="EMBL" id="CP002684">
    <property type="protein sequence ID" value="AEE33728.1"/>
    <property type="molecule type" value="Genomic_DNA"/>
</dbReference>
<dbReference type="PIR" id="H96632">
    <property type="entry name" value="H96632"/>
</dbReference>
<dbReference type="RefSeq" id="NP_176274.1">
    <property type="nucleotide sequence ID" value="NM_104758.1"/>
</dbReference>
<dbReference type="SMR" id="F4HPY8"/>
<dbReference type="FunCoup" id="F4HPY8">
    <property type="interactions" value="28"/>
</dbReference>
<dbReference type="STRING" id="3702.F4HPY8"/>
<dbReference type="GlyGen" id="F4HPY8">
    <property type="glycosylation" value="1 site"/>
</dbReference>
<dbReference type="PaxDb" id="3702-AT1G60750.1"/>
<dbReference type="ProteomicsDB" id="245018"/>
<dbReference type="EnsemblPlants" id="AT1G60750.1">
    <property type="protein sequence ID" value="AT1G60750.1"/>
    <property type="gene ID" value="AT1G60750"/>
</dbReference>
<dbReference type="GeneID" id="3767587"/>
<dbReference type="Gramene" id="AT1G60750.1">
    <property type="protein sequence ID" value="AT1G60750.1"/>
    <property type="gene ID" value="AT1G60750"/>
</dbReference>
<dbReference type="KEGG" id="ath:AT1G60750"/>
<dbReference type="Araport" id="AT1G60750"/>
<dbReference type="TAIR" id="AT1G60750"/>
<dbReference type="eggNOG" id="KOG1575">
    <property type="taxonomic scope" value="Eukaryota"/>
</dbReference>
<dbReference type="HOGENOM" id="CLU_023205_2_1_1"/>
<dbReference type="InParanoid" id="F4HPY8"/>
<dbReference type="OMA" id="IGISECA"/>
<dbReference type="PRO" id="PR:F4HPY8"/>
<dbReference type="Proteomes" id="UP000006548">
    <property type="component" value="Chromosome 1"/>
</dbReference>
<dbReference type="ExpressionAtlas" id="F4HPY8">
    <property type="expression patterns" value="baseline and differential"/>
</dbReference>
<dbReference type="GO" id="GO:0005634">
    <property type="term" value="C:nucleus"/>
    <property type="evidence" value="ECO:0007005"/>
    <property type="project" value="TAIR"/>
</dbReference>
<dbReference type="GO" id="GO:0016491">
    <property type="term" value="F:oxidoreductase activity"/>
    <property type="evidence" value="ECO:0007669"/>
    <property type="project" value="UniProtKB-KW"/>
</dbReference>
<dbReference type="CDD" id="cd19145">
    <property type="entry name" value="AKR_AKR13D1"/>
    <property type="match status" value="1"/>
</dbReference>
<dbReference type="Gene3D" id="3.20.20.100">
    <property type="entry name" value="NADP-dependent oxidoreductase domain"/>
    <property type="match status" value="1"/>
</dbReference>
<dbReference type="InterPro" id="IPR020471">
    <property type="entry name" value="AKR"/>
</dbReference>
<dbReference type="InterPro" id="IPR050791">
    <property type="entry name" value="Aldo-Keto_reductase"/>
</dbReference>
<dbReference type="InterPro" id="IPR023210">
    <property type="entry name" value="NADP_OxRdtase_dom"/>
</dbReference>
<dbReference type="InterPro" id="IPR036812">
    <property type="entry name" value="NADP_OxRdtase_dom_sf"/>
</dbReference>
<dbReference type="PANTHER" id="PTHR43625">
    <property type="entry name" value="AFLATOXIN B1 ALDEHYDE REDUCTASE"/>
    <property type="match status" value="1"/>
</dbReference>
<dbReference type="PANTHER" id="PTHR43625:SF44">
    <property type="entry name" value="ALDO-KETO REDUCTASE 1-RELATED"/>
    <property type="match status" value="1"/>
</dbReference>
<dbReference type="Pfam" id="PF00248">
    <property type="entry name" value="Aldo_ket_red"/>
    <property type="match status" value="1"/>
</dbReference>
<dbReference type="PRINTS" id="PR00069">
    <property type="entry name" value="ALDKETRDTASE"/>
</dbReference>
<dbReference type="SUPFAM" id="SSF51430">
    <property type="entry name" value="NAD(P)-linked oxidoreductase"/>
    <property type="match status" value="1"/>
</dbReference>
<comment type="similarity">
    <text evidence="2">Belongs to the aldo/keto reductase family.</text>
</comment>
<comment type="sequence caution" evidence="2">
    <conflict type="erroneous gene model prediction">
        <sequence resource="EMBL-CDS" id="AAB71969"/>
    </conflict>
</comment>
<proteinExistence type="inferred from homology"/>
<reference key="1">
    <citation type="journal article" date="2000" name="Nature">
        <title>Sequence and analysis of chromosome 1 of the plant Arabidopsis thaliana.</title>
        <authorList>
            <person name="Theologis A."/>
            <person name="Ecker J.R."/>
            <person name="Palm C.J."/>
            <person name="Federspiel N.A."/>
            <person name="Kaul S."/>
            <person name="White O."/>
            <person name="Alonso J."/>
            <person name="Altafi H."/>
            <person name="Araujo R."/>
            <person name="Bowman C.L."/>
            <person name="Brooks S.Y."/>
            <person name="Buehler E."/>
            <person name="Chan A."/>
            <person name="Chao Q."/>
            <person name="Chen H."/>
            <person name="Cheuk R.F."/>
            <person name="Chin C.W."/>
            <person name="Chung M.K."/>
            <person name="Conn L."/>
            <person name="Conway A.B."/>
            <person name="Conway A.R."/>
            <person name="Creasy T.H."/>
            <person name="Dewar K."/>
            <person name="Dunn P."/>
            <person name="Etgu P."/>
            <person name="Feldblyum T.V."/>
            <person name="Feng J.-D."/>
            <person name="Fong B."/>
            <person name="Fujii C.Y."/>
            <person name="Gill J.E."/>
            <person name="Goldsmith A.D."/>
            <person name="Haas B."/>
            <person name="Hansen N.F."/>
            <person name="Hughes B."/>
            <person name="Huizar L."/>
            <person name="Hunter J.L."/>
            <person name="Jenkins J."/>
            <person name="Johnson-Hopson C."/>
            <person name="Khan S."/>
            <person name="Khaykin E."/>
            <person name="Kim C.J."/>
            <person name="Koo H.L."/>
            <person name="Kremenetskaia I."/>
            <person name="Kurtz D.B."/>
            <person name="Kwan A."/>
            <person name="Lam B."/>
            <person name="Langin-Hooper S."/>
            <person name="Lee A."/>
            <person name="Lee J.M."/>
            <person name="Lenz C.A."/>
            <person name="Li J.H."/>
            <person name="Li Y.-P."/>
            <person name="Lin X."/>
            <person name="Liu S.X."/>
            <person name="Liu Z.A."/>
            <person name="Luros J.S."/>
            <person name="Maiti R."/>
            <person name="Marziali A."/>
            <person name="Militscher J."/>
            <person name="Miranda M."/>
            <person name="Nguyen M."/>
            <person name="Nierman W.C."/>
            <person name="Osborne B.I."/>
            <person name="Pai G."/>
            <person name="Peterson J."/>
            <person name="Pham P.K."/>
            <person name="Rizzo M."/>
            <person name="Rooney T."/>
            <person name="Rowley D."/>
            <person name="Sakano H."/>
            <person name="Salzberg S.L."/>
            <person name="Schwartz J.R."/>
            <person name="Shinn P."/>
            <person name="Southwick A.M."/>
            <person name="Sun H."/>
            <person name="Tallon L.J."/>
            <person name="Tambunga G."/>
            <person name="Toriumi M.J."/>
            <person name="Town C.D."/>
            <person name="Utterback T."/>
            <person name="Van Aken S."/>
            <person name="Vaysberg M."/>
            <person name="Vysotskaia V.S."/>
            <person name="Walker M."/>
            <person name="Wu D."/>
            <person name="Yu G."/>
            <person name="Fraser C.M."/>
            <person name="Venter J.C."/>
            <person name="Davis R.W."/>
        </authorList>
    </citation>
    <scope>NUCLEOTIDE SEQUENCE [LARGE SCALE GENOMIC DNA]</scope>
    <source>
        <strain>cv. Columbia</strain>
    </source>
</reference>
<reference key="2">
    <citation type="journal article" date="2017" name="Plant J.">
        <title>Araport11: a complete reannotation of the Arabidopsis thaliana reference genome.</title>
        <authorList>
            <person name="Cheng C.Y."/>
            <person name="Krishnakumar V."/>
            <person name="Chan A.P."/>
            <person name="Thibaud-Nissen F."/>
            <person name="Schobel S."/>
            <person name="Town C.D."/>
        </authorList>
    </citation>
    <scope>GENOME REANNOTATION</scope>
    <source>
        <strain>cv. Columbia</strain>
    </source>
</reference>
<accession>F4HPY8</accession>
<accession>O22712</accession>
<feature type="chain" id="PRO_0000415745" description="Probable aldo-keto reductase 6">
    <location>
        <begin position="1"/>
        <end position="330"/>
    </location>
</feature>
<feature type="active site" description="Proton donor" evidence="1">
    <location>
        <position position="64"/>
    </location>
</feature>
<feature type="binding site" evidence="1">
    <location>
        <position position="132"/>
    </location>
    <ligand>
        <name>substrate</name>
    </ligand>
</feature>
<feature type="binding site" evidence="1">
    <location>
        <begin position="211"/>
        <end position="221"/>
    </location>
    <ligand>
        <name>NADP(+)</name>
        <dbReference type="ChEBI" id="CHEBI:58349"/>
    </ligand>
</feature>
<name>ALKR6_ARATH</name>
<sequence length="330" mass="36352">MAEEACQVRRMKLGSQGLEVSAQGLGCMGLSDFYGAPTPETNAVALLRHAINAGVTFLDTSDIYGPETNELLLGKALKDGLRDKVELATKFGITASEDGKFGFRGDPEYVRIACEASLKRLGVTCIDLYYQHRIDTTLPIEITIGELKKLVEEGKIKYIGLSEASASTIRRAHAVHPITAVQIEWSLWSRDVEEDIIPTCRELGIGIVAYSPLGRGFLGLPRFQQENLENNKILYEKVQAMATKKSCTPAQLALAWVHHQGDDVCPIPGTSKIQNLNQNIGALSVKLTPEEMVELEAIAQPDFVKGERYDNNMVTYKDSETPPLSSWKAR</sequence>
<organism>
    <name type="scientific">Arabidopsis thaliana</name>
    <name type="common">Mouse-ear cress</name>
    <dbReference type="NCBI Taxonomy" id="3702"/>
    <lineage>
        <taxon>Eukaryota</taxon>
        <taxon>Viridiplantae</taxon>
        <taxon>Streptophyta</taxon>
        <taxon>Embryophyta</taxon>
        <taxon>Tracheophyta</taxon>
        <taxon>Spermatophyta</taxon>
        <taxon>Magnoliopsida</taxon>
        <taxon>eudicotyledons</taxon>
        <taxon>Gunneridae</taxon>
        <taxon>Pentapetalae</taxon>
        <taxon>rosids</taxon>
        <taxon>malvids</taxon>
        <taxon>Brassicales</taxon>
        <taxon>Brassicaceae</taxon>
        <taxon>Camelineae</taxon>
        <taxon>Arabidopsis</taxon>
    </lineage>
</organism>
<keyword id="KW-0521">NADP</keyword>
<keyword id="KW-0560">Oxidoreductase</keyword>
<keyword id="KW-1185">Reference proteome</keyword>
<protein>
    <recommendedName>
        <fullName>Probable aldo-keto reductase 6</fullName>
        <ecNumber>1.1.1.-</ecNumber>
    </recommendedName>
</protein>